<gene>
    <name evidence="2" type="primary">DPM2</name>
</gene>
<comment type="function">
    <text evidence="2">Regulates the biosynthesis of dolichol phosphate-mannose. Regulatory subunit of the dolichol-phosphate mannose (DPM) synthase complex; essential for the ER localization and stable expression of DPM1. Part of the glycosylphosphatidylinositol-N-acetylglucosaminyltransferase (GPI-GnT) complex that catalyzes the transfer of N-acetylglucosamine from UDP-N-acetylglucosamine to phosphatidylinositol and participates in the first step of GPI biosynthesis. May act by regulating the GPI-GNT complex.</text>
</comment>
<comment type="pathway">
    <text evidence="2">Protein modification; protein glycosylation.</text>
</comment>
<comment type="subunit">
    <text evidence="2">Component of the dolichol-phosphate mannose (DPM) synthase complex composed of DPM1, DPM2 and DPM3; in the complex interacts directly with DPM3. Component of the glycosylphosphatidylinositol-N-acetylglucosaminyltransferase (GPI-GnT) complex composed at least by PIGA, PIGC, PIGH, PIGP, PIGQ, PIGY and DPM2. Interacts with PIGA, PIGC and PIGQ.</text>
</comment>
<comment type="subcellular location">
    <subcellularLocation>
        <location evidence="1">Endoplasmic reticulum membrane</location>
        <topology evidence="1">Multi-pass membrane protein</topology>
    </subcellularLocation>
</comment>
<comment type="polymorphism">
    <text evidence="4">The Glu-10 variant in the Lec15.1/B4-2-1 cell line causes dramatic reduction of DPM2.</text>
</comment>
<comment type="similarity">
    <text evidence="5">Belongs to the DPM2 family.</text>
</comment>
<accession>Q9Z1P1</accession>
<evidence type="ECO:0000250" key="1"/>
<evidence type="ECO:0000250" key="2">
    <source>
        <dbReference type="UniProtKB" id="O94777"/>
    </source>
</evidence>
<evidence type="ECO:0000255" key="3"/>
<evidence type="ECO:0000269" key="4">
    <source>
    </source>
</evidence>
<evidence type="ECO:0000305" key="5"/>
<organism>
    <name type="scientific">Cricetulus griseus</name>
    <name type="common">Chinese hamster</name>
    <name type="synonym">Cricetulus barabensis griseus</name>
    <dbReference type="NCBI Taxonomy" id="10029"/>
    <lineage>
        <taxon>Eukaryota</taxon>
        <taxon>Metazoa</taxon>
        <taxon>Chordata</taxon>
        <taxon>Craniata</taxon>
        <taxon>Vertebrata</taxon>
        <taxon>Euteleostomi</taxon>
        <taxon>Mammalia</taxon>
        <taxon>Eutheria</taxon>
        <taxon>Euarchontoglires</taxon>
        <taxon>Glires</taxon>
        <taxon>Rodentia</taxon>
        <taxon>Myomorpha</taxon>
        <taxon>Muroidea</taxon>
        <taxon>Cricetidae</taxon>
        <taxon>Cricetinae</taxon>
        <taxon>Cricetulus</taxon>
    </lineage>
</organism>
<dbReference type="EMBL" id="AF115410">
    <property type="protein sequence ID" value="AAD04344.1"/>
    <property type="molecule type" value="mRNA"/>
</dbReference>
<dbReference type="EMBL" id="AF155144">
    <property type="protein sequence ID" value="AAD38194.1"/>
    <property type="molecule type" value="Genomic_DNA"/>
</dbReference>
<dbReference type="RefSeq" id="NP_001231464.1">
    <property type="nucleotide sequence ID" value="NM_001244535.1"/>
</dbReference>
<dbReference type="SMR" id="Q9Z1P1"/>
<dbReference type="PaxDb" id="10029-NP_001231464.1"/>
<dbReference type="Ensembl" id="ENSCGRT00001008542.1">
    <property type="protein sequence ID" value="ENSCGRP00001005539.1"/>
    <property type="gene ID" value="ENSCGRG00001007301.1"/>
</dbReference>
<dbReference type="GeneID" id="100689294"/>
<dbReference type="KEGG" id="cge:100689294"/>
<dbReference type="CTD" id="8818"/>
<dbReference type="eggNOG" id="KOG3488">
    <property type="taxonomic scope" value="Eukaryota"/>
</dbReference>
<dbReference type="GeneTree" id="ENSGT00390000001098"/>
<dbReference type="OMA" id="YTLWIIV"/>
<dbReference type="OrthoDB" id="311279at2759"/>
<dbReference type="UniPathway" id="UPA00378"/>
<dbReference type="Proteomes" id="UP000694386">
    <property type="component" value="Unplaced"/>
</dbReference>
<dbReference type="Proteomes" id="UP001108280">
    <property type="component" value="Chromosome 6"/>
</dbReference>
<dbReference type="GO" id="GO:0033185">
    <property type="term" value="C:dolichol-phosphate-mannose synthase complex"/>
    <property type="evidence" value="ECO:0007669"/>
    <property type="project" value="TreeGrafter"/>
</dbReference>
<dbReference type="GO" id="GO:0000506">
    <property type="term" value="C:glycosylphosphatidylinositol-N-acetylglucosaminyltransferase (GPI-GnT) complex"/>
    <property type="evidence" value="ECO:0000250"/>
    <property type="project" value="UniProtKB"/>
</dbReference>
<dbReference type="GO" id="GO:0030234">
    <property type="term" value="F:enzyme regulator activity"/>
    <property type="evidence" value="ECO:0007669"/>
    <property type="project" value="InterPro"/>
</dbReference>
<dbReference type="GO" id="GO:0180047">
    <property type="term" value="P:dolichol phosphate mannose biosynthetic process"/>
    <property type="evidence" value="ECO:0007669"/>
    <property type="project" value="InterPro"/>
</dbReference>
<dbReference type="GO" id="GO:0006506">
    <property type="term" value="P:GPI anchor biosynthetic process"/>
    <property type="evidence" value="ECO:0000250"/>
    <property type="project" value="UniProtKB"/>
</dbReference>
<dbReference type="GO" id="GO:0006486">
    <property type="term" value="P:protein glycosylation"/>
    <property type="evidence" value="ECO:0007669"/>
    <property type="project" value="UniProtKB-UniPathway"/>
</dbReference>
<dbReference type="InterPro" id="IPR009914">
    <property type="entry name" value="DPM2"/>
</dbReference>
<dbReference type="PANTHER" id="PTHR15039">
    <property type="entry name" value="DOLICHOL PHOSPHATE-MANNOSE BIOSYNTHESIS REGULATORY PROTEIN"/>
    <property type="match status" value="1"/>
</dbReference>
<dbReference type="PANTHER" id="PTHR15039:SF11">
    <property type="entry name" value="DOLICHOL PHOSPHATE-MANNOSE BIOSYNTHESIS REGULATORY PROTEIN"/>
    <property type="match status" value="1"/>
</dbReference>
<dbReference type="Pfam" id="PF07297">
    <property type="entry name" value="DPM2"/>
    <property type="match status" value="1"/>
</dbReference>
<keyword id="KW-0256">Endoplasmic reticulum</keyword>
<keyword id="KW-0472">Membrane</keyword>
<keyword id="KW-0812">Transmembrane</keyword>
<keyword id="KW-1133">Transmembrane helix</keyword>
<reference key="1">
    <citation type="journal article" date="2003" name="Biochem. Biophys. Res. Commun.">
        <title>A single point mutation resulting in an adversely reduced expression of DPM2 in the Lec15.1 cells.</title>
        <authorList>
            <person name="Pu L."/>
            <person name="Scocca J.R."/>
            <person name="Walker B.K."/>
            <person name="Krag S.S."/>
        </authorList>
    </citation>
    <scope>NUCLEOTIDE SEQUENCE [GENOMIC DNA]</scope>
    <scope>POLYMORPHISM</scope>
    <scope>VARIANT GLU-10</scope>
    <source>
        <tissue>Ovary</tissue>
    </source>
</reference>
<proteinExistence type="inferred from homology"/>
<feature type="chain" id="PRO_0000220872" description="Dolichol phosphate-mannose biosynthesis regulatory protein">
    <location>
        <begin position="1"/>
        <end position="84"/>
    </location>
</feature>
<feature type="transmembrane region" description="Helical" evidence="3">
    <location>
        <begin position="11"/>
        <end position="31"/>
    </location>
</feature>
<feature type="transmembrane region" description="Helical" evidence="3">
    <location>
        <begin position="49"/>
        <end position="69"/>
    </location>
</feature>
<feature type="sequence variant" description="In Lec15.1/B4-2-1 cell line." evidence="4">
    <original>G</original>
    <variation>E</variation>
    <location>
        <position position="10"/>
    </location>
</feature>
<sequence length="84" mass="9491">MATGTDQVVGFGLVAVSLIIFTYYTTWVILLPFIDSQHVIHKYFLPRAYAVLIPLATGLLLLLFVGLFITYVMLKSRRLTKKAQ</sequence>
<protein>
    <recommendedName>
        <fullName evidence="2">Dolichol phosphate-mannose biosynthesis regulatory protein</fullName>
    </recommendedName>
    <alternativeName>
        <fullName>Dolichol-phosphate mannose synthase subunit 2</fullName>
        <shortName>DPM synthase subunit 2</shortName>
    </alternativeName>
</protein>
<name>DPM2_CRIGR</name>